<gene>
    <name evidence="1" type="primary">lolD</name>
    <name type="ordered locus">Bfl395</name>
</gene>
<name>LOLD_BLOFL</name>
<comment type="function">
    <text evidence="1">Part of the ABC transporter complex LolCDE involved in the translocation of mature outer membrane-directed lipoproteins, from the inner membrane to the periplasmic chaperone, LolA. Responsible for the formation of the LolA-lipoprotein complex in an ATP-dependent manner.</text>
</comment>
<comment type="subunit">
    <text evidence="1">The complex is composed of two ATP-binding proteins (LolD) and two transmembrane proteins (LolC and LolE).</text>
</comment>
<comment type="subcellular location">
    <subcellularLocation>
        <location evidence="1">Cell inner membrane</location>
        <topology evidence="1">Peripheral membrane protein</topology>
    </subcellularLocation>
</comment>
<comment type="similarity">
    <text evidence="1">Belongs to the ABC transporter superfamily. Lipoprotein translocase (TC 3.A.1.125) family.</text>
</comment>
<organism>
    <name type="scientific">Blochmanniella floridana</name>
    <dbReference type="NCBI Taxonomy" id="203907"/>
    <lineage>
        <taxon>Bacteria</taxon>
        <taxon>Pseudomonadati</taxon>
        <taxon>Pseudomonadota</taxon>
        <taxon>Gammaproteobacteria</taxon>
        <taxon>Enterobacterales</taxon>
        <taxon>Enterobacteriaceae</taxon>
        <taxon>ant endosymbionts</taxon>
        <taxon>Candidatus Blochmanniella</taxon>
    </lineage>
</organism>
<reference key="1">
    <citation type="journal article" date="2003" name="Proc. Natl. Acad. Sci. U.S.A.">
        <title>The genome sequence of Blochmannia floridanus: comparative analysis of reduced genomes.</title>
        <authorList>
            <person name="Gil R."/>
            <person name="Silva F.J."/>
            <person name="Zientz E."/>
            <person name="Delmotte F."/>
            <person name="Gonzalez-Candelas F."/>
            <person name="Latorre A."/>
            <person name="Rausell C."/>
            <person name="Kamerbeek J."/>
            <person name="Gadau J."/>
            <person name="Hoelldobler B."/>
            <person name="van Ham R.C.H.J."/>
            <person name="Gross R."/>
            <person name="Moya A."/>
        </authorList>
    </citation>
    <scope>NUCLEOTIDE SEQUENCE [LARGE SCALE GENOMIC DNA]</scope>
</reference>
<protein>
    <recommendedName>
        <fullName evidence="1">Lipoprotein-releasing system ATP-binding protein LolD</fullName>
        <ecNumber evidence="1">7.6.2.-</ecNumber>
    </recommendedName>
</protein>
<feature type="chain" id="PRO_0000092427" description="Lipoprotein-releasing system ATP-binding protein LolD">
    <location>
        <begin position="1"/>
        <end position="235"/>
    </location>
</feature>
<feature type="domain" description="ABC transporter" evidence="1">
    <location>
        <begin position="13"/>
        <end position="235"/>
    </location>
</feature>
<feature type="binding site" evidence="1">
    <location>
        <begin position="49"/>
        <end position="56"/>
    </location>
    <ligand>
        <name>ATP</name>
        <dbReference type="ChEBI" id="CHEBI:30616"/>
    </ligand>
</feature>
<dbReference type="EC" id="7.6.2.-" evidence="1"/>
<dbReference type="EMBL" id="BX248583">
    <property type="protein sequence ID" value="CAD83461.1"/>
    <property type="molecule type" value="Genomic_DNA"/>
</dbReference>
<dbReference type="SMR" id="Q7VR29"/>
<dbReference type="STRING" id="203907.Bfl395"/>
<dbReference type="KEGG" id="bfl:Bfl395"/>
<dbReference type="eggNOG" id="COG1136">
    <property type="taxonomic scope" value="Bacteria"/>
</dbReference>
<dbReference type="HOGENOM" id="CLU_000604_1_22_6"/>
<dbReference type="Proteomes" id="UP000002192">
    <property type="component" value="Chromosome"/>
</dbReference>
<dbReference type="GO" id="GO:0005886">
    <property type="term" value="C:plasma membrane"/>
    <property type="evidence" value="ECO:0007669"/>
    <property type="project" value="UniProtKB-SubCell"/>
</dbReference>
<dbReference type="GO" id="GO:0005524">
    <property type="term" value="F:ATP binding"/>
    <property type="evidence" value="ECO:0007669"/>
    <property type="project" value="UniProtKB-KW"/>
</dbReference>
<dbReference type="GO" id="GO:0016887">
    <property type="term" value="F:ATP hydrolysis activity"/>
    <property type="evidence" value="ECO:0007669"/>
    <property type="project" value="InterPro"/>
</dbReference>
<dbReference type="CDD" id="cd03255">
    <property type="entry name" value="ABC_MJ0796_LolCDE_FtsE"/>
    <property type="match status" value="1"/>
</dbReference>
<dbReference type="FunFam" id="3.40.50.300:FF:000032">
    <property type="entry name" value="Export ABC transporter ATP-binding protein"/>
    <property type="match status" value="1"/>
</dbReference>
<dbReference type="Gene3D" id="3.40.50.300">
    <property type="entry name" value="P-loop containing nucleotide triphosphate hydrolases"/>
    <property type="match status" value="1"/>
</dbReference>
<dbReference type="InterPro" id="IPR003593">
    <property type="entry name" value="AAA+_ATPase"/>
</dbReference>
<dbReference type="InterPro" id="IPR003439">
    <property type="entry name" value="ABC_transporter-like_ATP-bd"/>
</dbReference>
<dbReference type="InterPro" id="IPR017871">
    <property type="entry name" value="ABC_transporter-like_CS"/>
</dbReference>
<dbReference type="InterPro" id="IPR017911">
    <property type="entry name" value="MacB-like_ATP-bd"/>
</dbReference>
<dbReference type="InterPro" id="IPR027417">
    <property type="entry name" value="P-loop_NTPase"/>
</dbReference>
<dbReference type="PANTHER" id="PTHR42798:SF7">
    <property type="entry name" value="ALPHA-D-RIBOSE 1-METHYLPHOSPHONATE 5-TRIPHOSPHATE SYNTHASE SUBUNIT PHNL"/>
    <property type="match status" value="1"/>
</dbReference>
<dbReference type="PANTHER" id="PTHR42798">
    <property type="entry name" value="LIPOPROTEIN-RELEASING SYSTEM ATP-BINDING PROTEIN LOLD"/>
    <property type="match status" value="1"/>
</dbReference>
<dbReference type="Pfam" id="PF00005">
    <property type="entry name" value="ABC_tran"/>
    <property type="match status" value="1"/>
</dbReference>
<dbReference type="SMART" id="SM00382">
    <property type="entry name" value="AAA"/>
    <property type="match status" value="1"/>
</dbReference>
<dbReference type="SUPFAM" id="SSF52540">
    <property type="entry name" value="P-loop containing nucleoside triphosphate hydrolases"/>
    <property type="match status" value="1"/>
</dbReference>
<dbReference type="PROSITE" id="PS00211">
    <property type="entry name" value="ABC_TRANSPORTER_1"/>
    <property type="match status" value="1"/>
</dbReference>
<dbReference type="PROSITE" id="PS50893">
    <property type="entry name" value="ABC_TRANSPORTER_2"/>
    <property type="match status" value="1"/>
</dbReference>
<dbReference type="PROSITE" id="PS51244">
    <property type="entry name" value="LOLD"/>
    <property type="match status" value="1"/>
</dbReference>
<evidence type="ECO:0000255" key="1">
    <source>
        <dbReference type="HAMAP-Rule" id="MF_01708"/>
    </source>
</evidence>
<proteinExistence type="inferred from homology"/>
<keyword id="KW-0067">ATP-binding</keyword>
<keyword id="KW-0997">Cell inner membrane</keyword>
<keyword id="KW-1003">Cell membrane</keyword>
<keyword id="KW-0472">Membrane</keyword>
<keyword id="KW-0547">Nucleotide-binding</keyword>
<keyword id="KW-1185">Reference proteome</keyword>
<keyword id="KW-1278">Translocase</keyword>
<keyword id="KW-0813">Transport</keyword>
<sequence length="235" mass="25942">MVNKNINDIPPILCCSNIIKRYQYSNFSITVLDGITMSIEYNKIIAIIGASGSGKSTLLHIMGGLDKPTSGDVFLEGRALNKLSDKDCSIMRNTSIGFIYQFHHLLPDFSVLENIAMPLLIKGLKFAIAKHKAQFILELIGLNNLCDRYPCELSGGESQRVAVARAIINNPPLVLADEPTGNLDESNSNNVFKLLEKINLWYGTTFVIATHDLSLAKKCHKIYIVSNGMLKISTI</sequence>
<accession>Q7VR29</accession>